<gene>
    <name evidence="1" type="primary">uvrC</name>
    <name type="ordered locus">BA_4757</name>
    <name type="ordered locus">GBAA_4757</name>
    <name type="ordered locus">BAS4416</name>
</gene>
<proteinExistence type="inferred from homology"/>
<protein>
    <recommendedName>
        <fullName evidence="1">UvrABC system protein C</fullName>
        <shortName evidence="1">Protein UvrC</shortName>
    </recommendedName>
    <alternativeName>
        <fullName evidence="1">Excinuclease ABC subunit C</fullName>
    </alternativeName>
</protein>
<evidence type="ECO:0000255" key="1">
    <source>
        <dbReference type="HAMAP-Rule" id="MF_00203"/>
    </source>
</evidence>
<feature type="chain" id="PRO_0000227393" description="UvrABC system protein C">
    <location>
        <begin position="1"/>
        <end position="594"/>
    </location>
</feature>
<feature type="domain" description="GIY-YIG" evidence="1">
    <location>
        <begin position="14"/>
        <end position="91"/>
    </location>
</feature>
<feature type="domain" description="UVR" evidence="1">
    <location>
        <begin position="196"/>
        <end position="231"/>
    </location>
</feature>
<dbReference type="EMBL" id="AE016879">
    <property type="protein sequence ID" value="AAP28449.1"/>
    <property type="molecule type" value="Genomic_DNA"/>
</dbReference>
<dbReference type="EMBL" id="AE017334">
    <property type="protein sequence ID" value="AAT33880.1"/>
    <property type="molecule type" value="Genomic_DNA"/>
</dbReference>
<dbReference type="EMBL" id="AE017225">
    <property type="protein sequence ID" value="AAT56714.1"/>
    <property type="molecule type" value="Genomic_DNA"/>
</dbReference>
<dbReference type="RefSeq" id="NP_846963.1">
    <property type="nucleotide sequence ID" value="NC_003997.3"/>
</dbReference>
<dbReference type="RefSeq" id="WP_000544304.1">
    <property type="nucleotide sequence ID" value="NZ_WXXJ01000026.1"/>
</dbReference>
<dbReference type="RefSeq" id="YP_030663.1">
    <property type="nucleotide sequence ID" value="NC_005945.1"/>
</dbReference>
<dbReference type="SMR" id="Q81L74"/>
<dbReference type="STRING" id="261594.GBAA_4757"/>
<dbReference type="DNASU" id="1083849"/>
<dbReference type="GeneID" id="45024392"/>
<dbReference type="KEGG" id="ban:BA_4757"/>
<dbReference type="KEGG" id="banh:HYU01_23185"/>
<dbReference type="KEGG" id="bar:GBAA_4757"/>
<dbReference type="KEGG" id="bat:BAS4416"/>
<dbReference type="PATRIC" id="fig|198094.11.peg.4721"/>
<dbReference type="eggNOG" id="COG0322">
    <property type="taxonomic scope" value="Bacteria"/>
</dbReference>
<dbReference type="HOGENOM" id="CLU_014841_3_2_9"/>
<dbReference type="OMA" id="HIECFDN"/>
<dbReference type="OrthoDB" id="9804933at2"/>
<dbReference type="Proteomes" id="UP000000427">
    <property type="component" value="Chromosome"/>
</dbReference>
<dbReference type="Proteomes" id="UP000000594">
    <property type="component" value="Chromosome"/>
</dbReference>
<dbReference type="GO" id="GO:0005737">
    <property type="term" value="C:cytoplasm"/>
    <property type="evidence" value="ECO:0007669"/>
    <property type="project" value="UniProtKB-SubCell"/>
</dbReference>
<dbReference type="GO" id="GO:0009380">
    <property type="term" value="C:excinuclease repair complex"/>
    <property type="evidence" value="ECO:0007669"/>
    <property type="project" value="InterPro"/>
</dbReference>
<dbReference type="GO" id="GO:0003677">
    <property type="term" value="F:DNA binding"/>
    <property type="evidence" value="ECO:0007669"/>
    <property type="project" value="UniProtKB-UniRule"/>
</dbReference>
<dbReference type="GO" id="GO:0009381">
    <property type="term" value="F:excinuclease ABC activity"/>
    <property type="evidence" value="ECO:0007669"/>
    <property type="project" value="UniProtKB-UniRule"/>
</dbReference>
<dbReference type="GO" id="GO:0006289">
    <property type="term" value="P:nucleotide-excision repair"/>
    <property type="evidence" value="ECO:0007669"/>
    <property type="project" value="UniProtKB-UniRule"/>
</dbReference>
<dbReference type="GO" id="GO:0009432">
    <property type="term" value="P:SOS response"/>
    <property type="evidence" value="ECO:0007669"/>
    <property type="project" value="UniProtKB-UniRule"/>
</dbReference>
<dbReference type="CDD" id="cd10434">
    <property type="entry name" value="GIY-YIG_UvrC_Cho"/>
    <property type="match status" value="1"/>
</dbReference>
<dbReference type="FunFam" id="1.10.150.20:FF:000005">
    <property type="entry name" value="UvrABC system protein C"/>
    <property type="match status" value="1"/>
</dbReference>
<dbReference type="FunFam" id="3.30.420.340:FF:000002">
    <property type="entry name" value="UvrABC system protein C"/>
    <property type="match status" value="1"/>
</dbReference>
<dbReference type="FunFam" id="3.40.1440.10:FF:000001">
    <property type="entry name" value="UvrABC system protein C"/>
    <property type="match status" value="1"/>
</dbReference>
<dbReference type="FunFam" id="4.10.860.10:FF:000002">
    <property type="entry name" value="UvrABC system protein C"/>
    <property type="match status" value="1"/>
</dbReference>
<dbReference type="Gene3D" id="1.10.150.20">
    <property type="entry name" value="5' to 3' exonuclease, C-terminal subdomain"/>
    <property type="match status" value="1"/>
</dbReference>
<dbReference type="Gene3D" id="3.40.1440.10">
    <property type="entry name" value="GIY-YIG endonuclease"/>
    <property type="match status" value="1"/>
</dbReference>
<dbReference type="Gene3D" id="4.10.860.10">
    <property type="entry name" value="UVR domain"/>
    <property type="match status" value="1"/>
</dbReference>
<dbReference type="Gene3D" id="3.30.420.340">
    <property type="entry name" value="UvrC, RNAse H endonuclease domain"/>
    <property type="match status" value="1"/>
</dbReference>
<dbReference type="HAMAP" id="MF_00203">
    <property type="entry name" value="UvrC"/>
    <property type="match status" value="1"/>
</dbReference>
<dbReference type="InterPro" id="IPR000305">
    <property type="entry name" value="GIY-YIG_endonuc"/>
</dbReference>
<dbReference type="InterPro" id="IPR035901">
    <property type="entry name" value="GIY-YIG_endonuc_sf"/>
</dbReference>
<dbReference type="InterPro" id="IPR047296">
    <property type="entry name" value="GIY-YIG_UvrC_Cho"/>
</dbReference>
<dbReference type="InterPro" id="IPR010994">
    <property type="entry name" value="RuvA_2-like"/>
</dbReference>
<dbReference type="InterPro" id="IPR001943">
    <property type="entry name" value="UVR_dom"/>
</dbReference>
<dbReference type="InterPro" id="IPR036876">
    <property type="entry name" value="UVR_dom_sf"/>
</dbReference>
<dbReference type="InterPro" id="IPR050066">
    <property type="entry name" value="UvrABC_protein_C"/>
</dbReference>
<dbReference type="InterPro" id="IPR004791">
    <property type="entry name" value="UvrC"/>
</dbReference>
<dbReference type="InterPro" id="IPR001162">
    <property type="entry name" value="UvrC_RNase_H_dom"/>
</dbReference>
<dbReference type="InterPro" id="IPR038476">
    <property type="entry name" value="UvrC_RNase_H_dom_sf"/>
</dbReference>
<dbReference type="NCBIfam" id="NF001824">
    <property type="entry name" value="PRK00558.1-5"/>
    <property type="match status" value="1"/>
</dbReference>
<dbReference type="NCBIfam" id="TIGR00194">
    <property type="entry name" value="uvrC"/>
    <property type="match status" value="1"/>
</dbReference>
<dbReference type="PANTHER" id="PTHR30562:SF1">
    <property type="entry name" value="UVRABC SYSTEM PROTEIN C"/>
    <property type="match status" value="1"/>
</dbReference>
<dbReference type="PANTHER" id="PTHR30562">
    <property type="entry name" value="UVRC/OXIDOREDUCTASE"/>
    <property type="match status" value="1"/>
</dbReference>
<dbReference type="Pfam" id="PF01541">
    <property type="entry name" value="GIY-YIG"/>
    <property type="match status" value="1"/>
</dbReference>
<dbReference type="Pfam" id="PF02151">
    <property type="entry name" value="UVR"/>
    <property type="match status" value="1"/>
</dbReference>
<dbReference type="Pfam" id="PF22920">
    <property type="entry name" value="UvrC_RNaseH"/>
    <property type="match status" value="1"/>
</dbReference>
<dbReference type="Pfam" id="PF08459">
    <property type="entry name" value="UvrC_RNaseH_dom"/>
    <property type="match status" value="1"/>
</dbReference>
<dbReference type="SMART" id="SM00465">
    <property type="entry name" value="GIYc"/>
    <property type="match status" value="1"/>
</dbReference>
<dbReference type="SUPFAM" id="SSF46600">
    <property type="entry name" value="C-terminal UvrC-binding domain of UvrB"/>
    <property type="match status" value="1"/>
</dbReference>
<dbReference type="SUPFAM" id="SSF82771">
    <property type="entry name" value="GIY-YIG endonuclease"/>
    <property type="match status" value="1"/>
</dbReference>
<dbReference type="SUPFAM" id="SSF47781">
    <property type="entry name" value="RuvA domain 2-like"/>
    <property type="match status" value="1"/>
</dbReference>
<dbReference type="PROSITE" id="PS50164">
    <property type="entry name" value="GIY_YIG"/>
    <property type="match status" value="1"/>
</dbReference>
<dbReference type="PROSITE" id="PS50151">
    <property type="entry name" value="UVR"/>
    <property type="match status" value="1"/>
</dbReference>
<dbReference type="PROSITE" id="PS50165">
    <property type="entry name" value="UVRC"/>
    <property type="match status" value="1"/>
</dbReference>
<sequence length="594" mass="68398">MHEHLKEKLAILPDQPGCYLMKDRQGTVIYVGKAKVLKNRVRSYFTGSHDGKTLRLVGEIVDFEYIVTSSNLEALILELNLIKKHDPKYNIQLKDDKTYPFIKITAEKQPRLLITRNVKKDKGKYFGPYPNAQSAHETKKLLDRMYPLRKCSNMPDKVCLYYHMGQCLAPCVKEVTEEQNKEIVDEIIKFLNGGHKEVRSELETKMYEASEKLEFERAKELRDQIAHIDAIMEKQKMIMSDLVDRDVFGYAVDKGWMCVQVFFVRKGKLIERDVSMFPIYDEPEEGFLTFIGQFYENSSHFKPKEIVVPGSIDSELVERFLEVEATQPKRGKKKDLVELANKNAKIALEEKFYLIERDEERTIKAVENLGKQLGIETPYRIEAFDNSNIQGTNPVSAMIAFIDGKPAKKEYRKYKIKTVQGPDDYESMREVVRRRYTRALKEGLPLPDLIIIDGGKGHLAAASDVLENELGLYIPMAGLVKDDKHKTSHLIIGDPPEPVMLERNSQEFYLLQRVQDEVHRFAITFHRQLHGKSVIQSALDDIPGIGDKRKKVLLKHFGSLKKMKEASIEEFVEAGMPKNVAETIYTYLTDKKTL</sequence>
<organism>
    <name type="scientific">Bacillus anthracis</name>
    <dbReference type="NCBI Taxonomy" id="1392"/>
    <lineage>
        <taxon>Bacteria</taxon>
        <taxon>Bacillati</taxon>
        <taxon>Bacillota</taxon>
        <taxon>Bacilli</taxon>
        <taxon>Bacillales</taxon>
        <taxon>Bacillaceae</taxon>
        <taxon>Bacillus</taxon>
        <taxon>Bacillus cereus group</taxon>
    </lineage>
</organism>
<accession>Q81L74</accession>
<accession>Q6HSM5</accession>
<accession>Q6KLX0</accession>
<name>UVRC_BACAN</name>
<reference key="1">
    <citation type="journal article" date="2003" name="Nature">
        <title>The genome sequence of Bacillus anthracis Ames and comparison to closely related bacteria.</title>
        <authorList>
            <person name="Read T.D."/>
            <person name="Peterson S.N."/>
            <person name="Tourasse N.J."/>
            <person name="Baillie L.W."/>
            <person name="Paulsen I.T."/>
            <person name="Nelson K.E."/>
            <person name="Tettelin H."/>
            <person name="Fouts D.E."/>
            <person name="Eisen J.A."/>
            <person name="Gill S.R."/>
            <person name="Holtzapple E.K."/>
            <person name="Okstad O.A."/>
            <person name="Helgason E."/>
            <person name="Rilstone J."/>
            <person name="Wu M."/>
            <person name="Kolonay J.F."/>
            <person name="Beanan M.J."/>
            <person name="Dodson R.J."/>
            <person name="Brinkac L.M."/>
            <person name="Gwinn M.L."/>
            <person name="DeBoy R.T."/>
            <person name="Madpu R."/>
            <person name="Daugherty S.C."/>
            <person name="Durkin A.S."/>
            <person name="Haft D.H."/>
            <person name="Nelson W.C."/>
            <person name="Peterson J.D."/>
            <person name="Pop M."/>
            <person name="Khouri H.M."/>
            <person name="Radune D."/>
            <person name="Benton J.L."/>
            <person name="Mahamoud Y."/>
            <person name="Jiang L."/>
            <person name="Hance I.R."/>
            <person name="Weidman J.F."/>
            <person name="Berry K.J."/>
            <person name="Plaut R.D."/>
            <person name="Wolf A.M."/>
            <person name="Watkins K.L."/>
            <person name="Nierman W.C."/>
            <person name="Hazen A."/>
            <person name="Cline R.T."/>
            <person name="Redmond C."/>
            <person name="Thwaite J.E."/>
            <person name="White O."/>
            <person name="Salzberg S.L."/>
            <person name="Thomason B."/>
            <person name="Friedlander A.M."/>
            <person name="Koehler T.M."/>
            <person name="Hanna P.C."/>
            <person name="Kolstoe A.-B."/>
            <person name="Fraser C.M."/>
        </authorList>
    </citation>
    <scope>NUCLEOTIDE SEQUENCE [LARGE SCALE GENOMIC DNA]</scope>
    <source>
        <strain>Ames / isolate Porton</strain>
    </source>
</reference>
<reference key="2">
    <citation type="journal article" date="2009" name="J. Bacteriol.">
        <title>The complete genome sequence of Bacillus anthracis Ames 'Ancestor'.</title>
        <authorList>
            <person name="Ravel J."/>
            <person name="Jiang L."/>
            <person name="Stanley S.T."/>
            <person name="Wilson M.R."/>
            <person name="Decker R.S."/>
            <person name="Read T.D."/>
            <person name="Worsham P."/>
            <person name="Keim P.S."/>
            <person name="Salzberg S.L."/>
            <person name="Fraser-Liggett C.M."/>
            <person name="Rasko D.A."/>
        </authorList>
    </citation>
    <scope>NUCLEOTIDE SEQUENCE [LARGE SCALE GENOMIC DNA]</scope>
    <source>
        <strain>Ames ancestor</strain>
    </source>
</reference>
<reference key="3">
    <citation type="submission" date="2004-01" db="EMBL/GenBank/DDBJ databases">
        <title>Complete genome sequence of Bacillus anthracis Sterne.</title>
        <authorList>
            <person name="Brettin T.S."/>
            <person name="Bruce D."/>
            <person name="Challacombe J.F."/>
            <person name="Gilna P."/>
            <person name="Han C."/>
            <person name="Hill K."/>
            <person name="Hitchcock P."/>
            <person name="Jackson P."/>
            <person name="Keim P."/>
            <person name="Longmire J."/>
            <person name="Lucas S."/>
            <person name="Okinaka R."/>
            <person name="Richardson P."/>
            <person name="Rubin E."/>
            <person name="Tice H."/>
        </authorList>
    </citation>
    <scope>NUCLEOTIDE SEQUENCE [LARGE SCALE GENOMIC DNA]</scope>
    <source>
        <strain>Sterne</strain>
    </source>
</reference>
<comment type="function">
    <text evidence="1">The UvrABC repair system catalyzes the recognition and processing of DNA lesions. UvrC both incises the 5' and 3' sides of the lesion. The N-terminal half is responsible for the 3' incision and the C-terminal half is responsible for the 5' incision.</text>
</comment>
<comment type="subunit">
    <text evidence="1">Interacts with UvrB in an incision complex.</text>
</comment>
<comment type="subcellular location">
    <subcellularLocation>
        <location evidence="1">Cytoplasm</location>
    </subcellularLocation>
</comment>
<comment type="similarity">
    <text evidence="1">Belongs to the UvrC family.</text>
</comment>
<keyword id="KW-0963">Cytoplasm</keyword>
<keyword id="KW-0227">DNA damage</keyword>
<keyword id="KW-0228">DNA excision</keyword>
<keyword id="KW-0234">DNA repair</keyword>
<keyword id="KW-0267">Excision nuclease</keyword>
<keyword id="KW-1185">Reference proteome</keyword>
<keyword id="KW-0742">SOS response</keyword>